<organism>
    <name type="scientific">Bacillus sp. (strain OxB-1)</name>
    <dbReference type="NCBI Taxonomy" id="98228"/>
    <lineage>
        <taxon>Bacteria</taxon>
        <taxon>Bacillati</taxon>
        <taxon>Bacillota</taxon>
        <taxon>Bacilli</taxon>
        <taxon>Bacillales</taxon>
        <taxon>Bacillaceae</taxon>
        <taxon>Bacillus</taxon>
    </lineage>
</organism>
<comment type="function">
    <text evidence="1">Catalyzes the stoichiometric dehydration of Z-phenylacetaldoxime to phenylacetonitrile. Prefers the Z-form of phenylacetaldoxime over its E-isomer.</text>
</comment>
<comment type="catalytic activity">
    <reaction evidence="1">
        <text>(Z)-phenylacetaldehyde oxime = phenylacetonitrile + H2O</text>
        <dbReference type="Rhea" id="RHEA:20069"/>
        <dbReference type="ChEBI" id="CHEBI:15377"/>
        <dbReference type="ChEBI" id="CHEBI:25979"/>
        <dbReference type="ChEBI" id="CHEBI:50723"/>
        <dbReference type="EC" id="4.8.1.4"/>
    </reaction>
    <physiologicalReaction direction="left-to-right" evidence="1">
        <dbReference type="Rhea" id="RHEA:20070"/>
    </physiologicalReaction>
</comment>
<comment type="cofactor">
    <cofactor evidence="1">
        <name>heme b</name>
        <dbReference type="ChEBI" id="CHEBI:60344"/>
    </cofactor>
</comment>
<comment type="biophysicochemical properties">
    <phDependence>
        <text evidence="1">Optimum pH is 7.0.</text>
    </phDependence>
    <temperatureDependence>
        <text evidence="1">Optimum temperature is 30 degrees Celsius.</text>
    </temperatureDependence>
</comment>
<comment type="subunit">
    <text evidence="1">Monomer.</text>
</comment>
<comment type="similarity">
    <text evidence="3">Belongs to the heme-containing dehydratase family.</text>
</comment>
<gene>
    <name evidence="2" type="primary">oxd</name>
</gene>
<evidence type="ECO:0000269" key="1">
    <source>
    </source>
</evidence>
<evidence type="ECO:0000303" key="2">
    <source>
    </source>
</evidence>
<evidence type="ECO:0000305" key="3"/>
<evidence type="ECO:0007829" key="4">
    <source>
        <dbReference type="PDB" id="7F2Y"/>
    </source>
</evidence>
<reference key="1">
    <citation type="journal article" date="2000" name="Biochemistry">
        <title>Novel heme-containing lyase, phenylacetaldoxime dehydratase from Bacillus sp. strain OxB-1: purification, characterization, and molecular cloning of the gene.</title>
        <authorList>
            <person name="Kato Y."/>
            <person name="Nakamura K."/>
            <person name="Sakiyama H."/>
            <person name="Mayhew S.G."/>
            <person name="Asano Y."/>
        </authorList>
    </citation>
    <scope>NUCLEOTIDE SEQUENCE [GENOMIC DNA]</scope>
    <scope>PROTEIN SEQUENCE OF 2-13; 60-73; 89-98; 246-259 AND 300-312</scope>
    <scope>FUNCTION</scope>
    <scope>CATALYTIC ACTIVITY</scope>
    <scope>COFACTOR</scope>
    <scope>BIOPHYSICOCHEMICAL PROPERTIES</scope>
    <scope>SUBUNIT</scope>
</reference>
<sequence length="351" mass="40151">MKNMPENHNPQANAWTAEFPPEMSYVVFAQIGIQSKSLDHAAEHLGMMKKSFDLRTGPKHVDRALHQGADGYQDSIFLAYWDEPETFKSWVADPEVQKWWSGKKIDENSPIGYWSEVTTIPIDHFETLHSGENYDNGVSHFVPIKHTEVHEYWGAMRDRMPVSASSDLESPLGLQLPEPIVRESFGKRLKVTAPDNICLIRTAQNWSKCGSGERETYIGLVEPTLIKANTFLRENASETGCISSKLVYEQTHDGEIVDKSCVIGYYLSMGHLERWTHDHPTHKAIYGTFYEMLKRHDFKTELALWHEVSVLQSKDIELIYVNCHPSTGFLPFFEVTEIQEPLLKSPSVRIQ</sequence>
<name>OXD_BACSX</name>
<keyword id="KW-0002">3D-structure</keyword>
<keyword id="KW-0903">Direct protein sequencing</keyword>
<keyword id="KW-0349">Heme</keyword>
<keyword id="KW-0408">Iron</keyword>
<keyword id="KW-0456">Lyase</keyword>
<keyword id="KW-0479">Metal-binding</keyword>
<protein>
    <recommendedName>
        <fullName evidence="2">Phenylacetaldoxime dehydratase</fullName>
        <ecNumber evidence="1">4.8.1.4</ecNumber>
    </recommendedName>
</protein>
<proteinExistence type="evidence at protein level"/>
<feature type="initiator methionine" description="Removed" evidence="1">
    <location>
        <position position="1"/>
    </location>
</feature>
<feature type="chain" id="PRO_0000058108" description="Phenylacetaldoxime dehydratase">
    <location>
        <begin position="2"/>
        <end position="351"/>
    </location>
</feature>
<feature type="strand" evidence="4">
    <location>
        <begin position="15"/>
        <end position="17"/>
    </location>
</feature>
<feature type="strand" evidence="4">
    <location>
        <begin position="25"/>
        <end position="37"/>
    </location>
</feature>
<feature type="helix" evidence="4">
    <location>
        <begin position="38"/>
        <end position="41"/>
    </location>
</feature>
<feature type="helix" evidence="4">
    <location>
        <begin position="42"/>
        <end position="51"/>
    </location>
</feature>
<feature type="strand" evidence="4">
    <location>
        <begin position="59"/>
        <end position="67"/>
    </location>
</feature>
<feature type="helix" evidence="4">
    <location>
        <begin position="69"/>
        <end position="71"/>
    </location>
</feature>
<feature type="strand" evidence="4">
    <location>
        <begin position="73"/>
        <end position="82"/>
    </location>
</feature>
<feature type="helix" evidence="4">
    <location>
        <begin position="84"/>
        <end position="91"/>
    </location>
</feature>
<feature type="helix" evidence="4">
    <location>
        <begin position="94"/>
        <end position="97"/>
    </location>
</feature>
<feature type="helix" evidence="4">
    <location>
        <begin position="100"/>
        <end position="102"/>
    </location>
</feature>
<feature type="strand" evidence="4">
    <location>
        <begin position="112"/>
        <end position="121"/>
    </location>
</feature>
<feature type="helix" evidence="4">
    <location>
        <begin position="122"/>
        <end position="124"/>
    </location>
</feature>
<feature type="strand" evidence="4">
    <location>
        <begin position="125"/>
        <end position="131"/>
    </location>
</feature>
<feature type="helix" evidence="4">
    <location>
        <begin position="137"/>
        <end position="140"/>
    </location>
</feature>
<feature type="strand" evidence="4">
    <location>
        <begin position="144"/>
        <end position="146"/>
    </location>
</feature>
<feature type="helix" evidence="4">
    <location>
        <begin position="155"/>
        <end position="159"/>
    </location>
</feature>
<feature type="helix" evidence="4">
    <location>
        <begin position="161"/>
        <end position="164"/>
    </location>
</feature>
<feature type="turn" evidence="4">
    <location>
        <begin position="171"/>
        <end position="174"/>
    </location>
</feature>
<feature type="strand" evidence="4">
    <location>
        <begin position="188"/>
        <end position="192"/>
    </location>
</feature>
<feature type="strand" evidence="4">
    <location>
        <begin position="197"/>
        <end position="205"/>
    </location>
</feature>
<feature type="helix" evidence="4">
    <location>
        <begin position="211"/>
        <end position="220"/>
    </location>
</feature>
<feature type="helix" evidence="4">
    <location>
        <begin position="222"/>
        <end position="234"/>
    </location>
</feature>
<feature type="helix" evidence="4">
    <location>
        <begin position="236"/>
        <end position="239"/>
    </location>
</feature>
<feature type="strand" evidence="4">
    <location>
        <begin position="241"/>
        <end position="250"/>
    </location>
</feature>
<feature type="strand" evidence="4">
    <location>
        <begin position="256"/>
        <end position="268"/>
    </location>
</feature>
<feature type="helix" evidence="4">
    <location>
        <begin position="269"/>
        <end position="278"/>
    </location>
</feature>
<feature type="helix" evidence="4">
    <location>
        <begin position="280"/>
        <end position="294"/>
    </location>
</feature>
<feature type="turn" evidence="4">
    <location>
        <begin position="295"/>
        <end position="298"/>
    </location>
</feature>
<feature type="strand" evidence="4">
    <location>
        <begin position="303"/>
        <end position="311"/>
    </location>
</feature>
<feature type="helix" evidence="4">
    <location>
        <begin position="313"/>
        <end position="315"/>
    </location>
</feature>
<feature type="strand" evidence="4">
    <location>
        <begin position="316"/>
        <end position="322"/>
    </location>
</feature>
<feature type="turn" evidence="4">
    <location>
        <begin position="328"/>
        <end position="331"/>
    </location>
</feature>
<feature type="strand" evidence="4">
    <location>
        <begin position="332"/>
        <end position="337"/>
    </location>
</feature>
<dbReference type="EC" id="4.8.1.4" evidence="1"/>
<dbReference type="EMBL" id="AB028892">
    <property type="protein sequence ID" value="BAA90461.1"/>
    <property type="molecule type" value="Genomic_DNA"/>
</dbReference>
<dbReference type="PDB" id="7F2Y">
    <property type="method" value="X-ray"/>
    <property type="resolution" value="1.55 A"/>
    <property type="chains" value="A=1-351"/>
</dbReference>
<dbReference type="PDB" id="7F2Z">
    <property type="method" value="X-ray"/>
    <property type="resolution" value="2.30 A"/>
    <property type="chains" value="A/B=1-351"/>
</dbReference>
<dbReference type="PDB" id="7F30">
    <property type="method" value="X-ray"/>
    <property type="resolution" value="2.00 A"/>
    <property type="chains" value="A=1-351"/>
</dbReference>
<dbReference type="PDBsum" id="7F2Y"/>
<dbReference type="PDBsum" id="7F2Z"/>
<dbReference type="PDBsum" id="7F30"/>
<dbReference type="SMR" id="P82604"/>
<dbReference type="STRING" id="98228.OXB_1097"/>
<dbReference type="OrthoDB" id="3807625at2"/>
<dbReference type="BioCyc" id="MetaCyc:MONOMER-15570"/>
<dbReference type="BRENDA" id="4.99.1.7">
    <property type="organism ID" value="691"/>
</dbReference>
<dbReference type="GO" id="GO:0046872">
    <property type="term" value="F:metal ion binding"/>
    <property type="evidence" value="ECO:0007669"/>
    <property type="project" value="UniProtKB-KW"/>
</dbReference>
<dbReference type="GO" id="GO:0018814">
    <property type="term" value="F:phenylacetaldoxime dehydratase activity"/>
    <property type="evidence" value="ECO:0007669"/>
    <property type="project" value="RHEA"/>
</dbReference>
<dbReference type="InterPro" id="IPR025702">
    <property type="entry name" value="OXD"/>
</dbReference>
<dbReference type="Pfam" id="PF13816">
    <property type="entry name" value="Dehydratase_hem"/>
    <property type="match status" value="1"/>
</dbReference>
<accession>P82604</accession>